<name>RECA_SYMTH</name>
<protein>
    <recommendedName>
        <fullName evidence="1">Protein RecA</fullName>
    </recommendedName>
    <alternativeName>
        <fullName evidence="1">Recombinase A</fullName>
    </alternativeName>
</protein>
<keyword id="KW-0067">ATP-binding</keyword>
<keyword id="KW-0963">Cytoplasm</keyword>
<keyword id="KW-0227">DNA damage</keyword>
<keyword id="KW-0233">DNA recombination</keyword>
<keyword id="KW-0234">DNA repair</keyword>
<keyword id="KW-0238">DNA-binding</keyword>
<keyword id="KW-0547">Nucleotide-binding</keyword>
<keyword id="KW-1185">Reference proteome</keyword>
<keyword id="KW-0742">SOS response</keyword>
<gene>
    <name evidence="1" type="primary">recA</name>
    <name type="ordered locus">STH1665</name>
</gene>
<comment type="function">
    <text evidence="1">Can catalyze the hydrolysis of ATP in the presence of single-stranded DNA, the ATP-dependent uptake of single-stranded DNA by duplex DNA, and the ATP-dependent hybridization of homologous single-stranded DNAs. It interacts with LexA causing its activation and leading to its autocatalytic cleavage.</text>
</comment>
<comment type="subcellular location">
    <subcellularLocation>
        <location evidence="1">Cytoplasm</location>
    </subcellularLocation>
</comment>
<comment type="similarity">
    <text evidence="1">Belongs to the RecA family.</text>
</comment>
<proteinExistence type="inferred from homology"/>
<accession>Q67NU3</accession>
<evidence type="ECO:0000255" key="1">
    <source>
        <dbReference type="HAMAP-Rule" id="MF_00268"/>
    </source>
</evidence>
<sequence>MALDPAKQKAIDMALAQIEKQFGKGSIMRLGEQMSRLNVEVIPTGSVALDVALGVGGLPRGRITEIYGPESSGKTTVALHVIAEAQKMGGVAAFVDAEHALDPVYAQALGVDIDNLLVSQPDTGEQALEITETLVRSGAVDVVVVDSVAALVPKAEIEGEMGDSFVGLQARLMSQALRKLTGAISKSKAVVIFINQIREKVGVMFGNPETTPGGRALKFYSSVRLEVRKTETLKSGQEVVGSRTRVKVVKNKVAPPFKQAEFDILYGQGISKEGSLIDIGTELNPPVIVKSGAWYSYGDLRIGQGKDNARDWLRQHPEVAAEIEQKIKERLNVASLPVKYADEEAGDADV</sequence>
<organism>
    <name type="scientific">Symbiobacterium thermophilum (strain DSM 24528 / JCM 14929 / IAM 14863 / T)</name>
    <dbReference type="NCBI Taxonomy" id="292459"/>
    <lineage>
        <taxon>Bacteria</taxon>
        <taxon>Bacillati</taxon>
        <taxon>Bacillota</taxon>
        <taxon>Clostridia</taxon>
        <taxon>Eubacteriales</taxon>
        <taxon>Symbiobacteriaceae</taxon>
        <taxon>Symbiobacterium</taxon>
    </lineage>
</organism>
<dbReference type="EMBL" id="AP006840">
    <property type="protein sequence ID" value="BAD40650.1"/>
    <property type="molecule type" value="Genomic_DNA"/>
</dbReference>
<dbReference type="RefSeq" id="WP_011195794.1">
    <property type="nucleotide sequence ID" value="NC_006177.1"/>
</dbReference>
<dbReference type="SMR" id="Q67NU3"/>
<dbReference type="STRING" id="292459.STH1665"/>
<dbReference type="KEGG" id="sth:STH1665"/>
<dbReference type="eggNOG" id="COG0468">
    <property type="taxonomic scope" value="Bacteria"/>
</dbReference>
<dbReference type="HOGENOM" id="CLU_040469_1_2_9"/>
<dbReference type="OrthoDB" id="9776733at2"/>
<dbReference type="Proteomes" id="UP000000417">
    <property type="component" value="Chromosome"/>
</dbReference>
<dbReference type="GO" id="GO:0005829">
    <property type="term" value="C:cytosol"/>
    <property type="evidence" value="ECO:0007669"/>
    <property type="project" value="TreeGrafter"/>
</dbReference>
<dbReference type="GO" id="GO:0005524">
    <property type="term" value="F:ATP binding"/>
    <property type="evidence" value="ECO:0007669"/>
    <property type="project" value="UniProtKB-UniRule"/>
</dbReference>
<dbReference type="GO" id="GO:0016887">
    <property type="term" value="F:ATP hydrolysis activity"/>
    <property type="evidence" value="ECO:0007669"/>
    <property type="project" value="InterPro"/>
</dbReference>
<dbReference type="GO" id="GO:0140664">
    <property type="term" value="F:ATP-dependent DNA damage sensor activity"/>
    <property type="evidence" value="ECO:0007669"/>
    <property type="project" value="InterPro"/>
</dbReference>
<dbReference type="GO" id="GO:0003684">
    <property type="term" value="F:damaged DNA binding"/>
    <property type="evidence" value="ECO:0007669"/>
    <property type="project" value="UniProtKB-UniRule"/>
</dbReference>
<dbReference type="GO" id="GO:0003697">
    <property type="term" value="F:single-stranded DNA binding"/>
    <property type="evidence" value="ECO:0007669"/>
    <property type="project" value="UniProtKB-UniRule"/>
</dbReference>
<dbReference type="GO" id="GO:0006310">
    <property type="term" value="P:DNA recombination"/>
    <property type="evidence" value="ECO:0007669"/>
    <property type="project" value="UniProtKB-UniRule"/>
</dbReference>
<dbReference type="GO" id="GO:0006281">
    <property type="term" value="P:DNA repair"/>
    <property type="evidence" value="ECO:0007669"/>
    <property type="project" value="UniProtKB-UniRule"/>
</dbReference>
<dbReference type="GO" id="GO:0009432">
    <property type="term" value="P:SOS response"/>
    <property type="evidence" value="ECO:0007669"/>
    <property type="project" value="UniProtKB-UniRule"/>
</dbReference>
<dbReference type="CDD" id="cd00983">
    <property type="entry name" value="RecA"/>
    <property type="match status" value="1"/>
</dbReference>
<dbReference type="FunFam" id="3.40.50.300:FF:000087">
    <property type="entry name" value="Recombinase RecA"/>
    <property type="match status" value="1"/>
</dbReference>
<dbReference type="Gene3D" id="3.40.50.300">
    <property type="entry name" value="P-loop containing nucleotide triphosphate hydrolases"/>
    <property type="match status" value="1"/>
</dbReference>
<dbReference type="HAMAP" id="MF_00268">
    <property type="entry name" value="RecA"/>
    <property type="match status" value="1"/>
</dbReference>
<dbReference type="InterPro" id="IPR003593">
    <property type="entry name" value="AAA+_ATPase"/>
</dbReference>
<dbReference type="InterPro" id="IPR013765">
    <property type="entry name" value="DNA_recomb/repair_RecA"/>
</dbReference>
<dbReference type="InterPro" id="IPR020584">
    <property type="entry name" value="DNA_recomb/repair_RecA_CS"/>
</dbReference>
<dbReference type="InterPro" id="IPR027417">
    <property type="entry name" value="P-loop_NTPase"/>
</dbReference>
<dbReference type="InterPro" id="IPR049261">
    <property type="entry name" value="RecA-like_C"/>
</dbReference>
<dbReference type="InterPro" id="IPR049428">
    <property type="entry name" value="RecA-like_N"/>
</dbReference>
<dbReference type="InterPro" id="IPR020588">
    <property type="entry name" value="RecA_ATP-bd"/>
</dbReference>
<dbReference type="InterPro" id="IPR023400">
    <property type="entry name" value="RecA_C_sf"/>
</dbReference>
<dbReference type="InterPro" id="IPR020587">
    <property type="entry name" value="RecA_monomer-monomer_interface"/>
</dbReference>
<dbReference type="NCBIfam" id="TIGR02012">
    <property type="entry name" value="tigrfam_recA"/>
    <property type="match status" value="1"/>
</dbReference>
<dbReference type="PANTHER" id="PTHR45900:SF1">
    <property type="entry name" value="MITOCHONDRIAL DNA REPAIR PROTEIN RECA HOMOLOG-RELATED"/>
    <property type="match status" value="1"/>
</dbReference>
<dbReference type="PANTHER" id="PTHR45900">
    <property type="entry name" value="RECA"/>
    <property type="match status" value="1"/>
</dbReference>
<dbReference type="Pfam" id="PF00154">
    <property type="entry name" value="RecA"/>
    <property type="match status" value="1"/>
</dbReference>
<dbReference type="Pfam" id="PF21096">
    <property type="entry name" value="RecA_C"/>
    <property type="match status" value="1"/>
</dbReference>
<dbReference type="PRINTS" id="PR00142">
    <property type="entry name" value="RECA"/>
</dbReference>
<dbReference type="SMART" id="SM00382">
    <property type="entry name" value="AAA"/>
    <property type="match status" value="1"/>
</dbReference>
<dbReference type="SUPFAM" id="SSF52540">
    <property type="entry name" value="P-loop containing nucleoside triphosphate hydrolases"/>
    <property type="match status" value="1"/>
</dbReference>
<dbReference type="SUPFAM" id="SSF54752">
    <property type="entry name" value="RecA protein, C-terminal domain"/>
    <property type="match status" value="1"/>
</dbReference>
<dbReference type="PROSITE" id="PS00321">
    <property type="entry name" value="RECA_1"/>
    <property type="match status" value="1"/>
</dbReference>
<dbReference type="PROSITE" id="PS50162">
    <property type="entry name" value="RECA_2"/>
    <property type="match status" value="1"/>
</dbReference>
<dbReference type="PROSITE" id="PS50163">
    <property type="entry name" value="RECA_3"/>
    <property type="match status" value="1"/>
</dbReference>
<feature type="chain" id="PRO_0000122872" description="Protein RecA">
    <location>
        <begin position="1"/>
        <end position="350"/>
    </location>
</feature>
<feature type="binding site" evidence="1">
    <location>
        <begin position="68"/>
        <end position="75"/>
    </location>
    <ligand>
        <name>ATP</name>
        <dbReference type="ChEBI" id="CHEBI:30616"/>
    </ligand>
</feature>
<reference key="1">
    <citation type="journal article" date="2004" name="Nucleic Acids Res.">
        <title>Genome sequence of Symbiobacterium thermophilum, an uncultivable bacterium that depends on microbial commensalism.</title>
        <authorList>
            <person name="Ueda K."/>
            <person name="Yamashita A."/>
            <person name="Ishikawa J."/>
            <person name="Shimada M."/>
            <person name="Watsuji T."/>
            <person name="Morimura K."/>
            <person name="Ikeda H."/>
            <person name="Hattori M."/>
            <person name="Beppu T."/>
        </authorList>
    </citation>
    <scope>NUCLEOTIDE SEQUENCE [LARGE SCALE GENOMIC DNA]</scope>
    <source>
        <strain>DSM 24528 / JCM 14929 / IAM 14863 / T</strain>
    </source>
</reference>